<name>ERH_SCHPO</name>
<evidence type="ECO:0000269" key="1">
    <source>
    </source>
</evidence>
<evidence type="ECO:0000269" key="2">
    <source>
    </source>
</evidence>
<evidence type="ECO:0000269" key="3">
    <source>
    </source>
</evidence>
<evidence type="ECO:0000269" key="4">
    <source>
    </source>
</evidence>
<evidence type="ECO:0000305" key="5"/>
<evidence type="ECO:0000312" key="6">
    <source>
        <dbReference type="EMBL" id="AFK79846.1"/>
    </source>
</evidence>
<evidence type="ECO:0000312" key="7">
    <source>
        <dbReference type="PomBase" id="SPAC19G12.17"/>
    </source>
</evidence>
<evidence type="ECO:0007744" key="8">
    <source>
        <dbReference type="PDB" id="6AKJ"/>
    </source>
</evidence>
<evidence type="ECO:0007744" key="9">
    <source>
        <dbReference type="PDB" id="6S2W"/>
    </source>
</evidence>
<evidence type="ECO:0007829" key="10">
    <source>
        <dbReference type="PDB" id="6AKJ"/>
    </source>
</evidence>
<evidence type="ECO:0007829" key="11">
    <source>
        <dbReference type="PDB" id="6S2W"/>
    </source>
</evidence>
<keyword id="KW-0002">3D-structure</keyword>
<keyword id="KW-0963">Cytoplasm</keyword>
<keyword id="KW-0539">Nucleus</keyword>
<keyword id="KW-1185">Reference proteome</keyword>
<protein>
    <recommendedName>
        <fullName evidence="5">Enhancer of rudimentary homolog 1</fullName>
    </recommendedName>
</protein>
<dbReference type="EMBL" id="JN194206">
    <property type="protein sequence ID" value="AFK79846.1"/>
    <property type="molecule type" value="mRNA"/>
</dbReference>
<dbReference type="EMBL" id="JN194210">
    <property type="protein sequence ID" value="AFK79850.1"/>
    <property type="molecule type" value="Genomic_DNA"/>
</dbReference>
<dbReference type="EMBL" id="CU329670">
    <property type="protein sequence ID" value="CCD31336.1"/>
    <property type="molecule type" value="Genomic_DNA"/>
</dbReference>
<dbReference type="RefSeq" id="XP_004001791.1">
    <property type="nucleotide sequence ID" value="XM_004001742.1"/>
</dbReference>
<dbReference type="PDB" id="6AKJ">
    <property type="method" value="X-ray"/>
    <property type="resolution" value="2.70 A"/>
    <property type="chains" value="A/B=1-104"/>
</dbReference>
<dbReference type="PDB" id="6S2W">
    <property type="method" value="X-ray"/>
    <property type="resolution" value="1.95 A"/>
    <property type="chains" value="A/B/C=1-104"/>
</dbReference>
<dbReference type="PDBsum" id="6AKJ"/>
<dbReference type="PDBsum" id="6S2W"/>
<dbReference type="SMR" id="G2TRN4"/>
<dbReference type="BioGRID" id="4254536">
    <property type="interactions" value="19"/>
</dbReference>
<dbReference type="FunCoup" id="G2TRN4">
    <property type="interactions" value="16"/>
</dbReference>
<dbReference type="STRING" id="284812.G2TRN4"/>
<dbReference type="iPTMnet" id="G2TRN4"/>
<dbReference type="PaxDb" id="4896-SPAC19G12.17.1"/>
<dbReference type="EnsemblFungi" id="SPAC19G12.17.1">
    <property type="protein sequence ID" value="SPAC19G12.17.1:pep"/>
    <property type="gene ID" value="SPAC19G12.17"/>
</dbReference>
<dbReference type="PomBase" id="SPAC19G12.17">
    <property type="gene designation" value="erh1"/>
</dbReference>
<dbReference type="VEuPathDB" id="FungiDB:SPAC19G12.17"/>
<dbReference type="eggNOG" id="ENOG502RDB9">
    <property type="taxonomic scope" value="Eukaryota"/>
</dbReference>
<dbReference type="HOGENOM" id="CLU_2251618_0_0_1"/>
<dbReference type="InParanoid" id="G2TRN4"/>
<dbReference type="OMA" id="KTRIWSD"/>
<dbReference type="PRO" id="PR:G2TRN4"/>
<dbReference type="Proteomes" id="UP000002485">
    <property type="component" value="Chromosome I"/>
</dbReference>
<dbReference type="GO" id="GO:1905754">
    <property type="term" value="C:ascospore-type prospore nucleus"/>
    <property type="evidence" value="ECO:0000314"/>
    <property type="project" value="PomBase"/>
</dbReference>
<dbReference type="GO" id="GO:0005737">
    <property type="term" value="C:cytoplasm"/>
    <property type="evidence" value="ECO:0000314"/>
    <property type="project" value="PomBase"/>
</dbReference>
<dbReference type="GO" id="GO:1990342">
    <property type="term" value="C:heterochromatin island"/>
    <property type="evidence" value="ECO:0000314"/>
    <property type="project" value="PomBase"/>
</dbReference>
<dbReference type="GO" id="GO:1990251">
    <property type="term" value="C:nuclear exosome focus"/>
    <property type="evidence" value="ECO:0000353"/>
    <property type="project" value="PomBase"/>
</dbReference>
<dbReference type="GO" id="GO:0005654">
    <property type="term" value="C:nucleoplasm"/>
    <property type="evidence" value="ECO:0000314"/>
    <property type="project" value="PomBase"/>
</dbReference>
<dbReference type="GO" id="GO:0005634">
    <property type="term" value="C:nucleus"/>
    <property type="evidence" value="ECO:0000314"/>
    <property type="project" value="PomBase"/>
</dbReference>
<dbReference type="GO" id="GO:0033553">
    <property type="term" value="C:rDNA heterochromatin"/>
    <property type="evidence" value="ECO:0000314"/>
    <property type="project" value="PomBase"/>
</dbReference>
<dbReference type="GO" id="GO:0140678">
    <property type="term" value="F:molecular function inhibitor activity"/>
    <property type="evidence" value="ECO:0000269"/>
    <property type="project" value="PomBase"/>
</dbReference>
<dbReference type="GO" id="GO:0033621">
    <property type="term" value="P:nuclear mRNA surveillance of meiosis-specific transcripts"/>
    <property type="evidence" value="ECO:0000315"/>
    <property type="project" value="PomBase"/>
</dbReference>
<dbReference type="GO" id="GO:1902801">
    <property type="term" value="P:regulation of siRNA-independent facultative heterochromatin formation"/>
    <property type="evidence" value="ECO:0000315"/>
    <property type="project" value="PomBase"/>
</dbReference>
<dbReference type="GO" id="GO:0043628">
    <property type="term" value="P:regulatory ncRNA 3'-end processing"/>
    <property type="evidence" value="ECO:0000269"/>
    <property type="project" value="PomBase"/>
</dbReference>
<dbReference type="Gene3D" id="3.30.2260.10">
    <property type="entry name" value="Enhancer of rudimentary"/>
    <property type="match status" value="1"/>
</dbReference>
<dbReference type="InterPro" id="IPR035912">
    <property type="entry name" value="EHR_sf"/>
</dbReference>
<dbReference type="InterPro" id="IPR000781">
    <property type="entry name" value="ERH"/>
</dbReference>
<dbReference type="PANTHER" id="PTHR12373">
    <property type="entry name" value="ENHANCER OF RUDIMENTARY ERH"/>
    <property type="match status" value="1"/>
</dbReference>
<dbReference type="PANTHER" id="PTHR12373:SF0">
    <property type="entry name" value="ENHANCER OF RUDIMENTARY HOMOLOG"/>
    <property type="match status" value="1"/>
</dbReference>
<dbReference type="Pfam" id="PF01133">
    <property type="entry name" value="ER"/>
    <property type="match status" value="1"/>
</dbReference>
<dbReference type="SUPFAM" id="SSF143875">
    <property type="entry name" value="ERH-like"/>
    <property type="match status" value="1"/>
</dbReference>
<sequence>MSPPPAESHIILLIQQGSDPKTRIWSDHCSLRSAIEYIVGVYQTNQAVSEKESIDVSRFFNFFDEIYDCVPLVYDRHFRAYIPHEKQWLLHHAQEYLTAARQIP</sequence>
<organism>
    <name type="scientific">Schizosaccharomyces pombe (strain 972 / ATCC 24843)</name>
    <name type="common">Fission yeast</name>
    <dbReference type="NCBI Taxonomy" id="284812"/>
    <lineage>
        <taxon>Eukaryota</taxon>
        <taxon>Fungi</taxon>
        <taxon>Dikarya</taxon>
        <taxon>Ascomycota</taxon>
        <taxon>Taphrinomycotina</taxon>
        <taxon>Schizosaccharomycetes</taxon>
        <taxon>Schizosaccharomycetales</taxon>
        <taxon>Schizosaccharomycetaceae</taxon>
        <taxon>Schizosaccharomyces</taxon>
    </lineage>
</organism>
<reference evidence="6" key="1">
    <citation type="journal article" date="2012" name="PLoS ONE">
        <title>Identification and Functional Analysis of the erh1(+) Gene Encoding Enhancer of Rudimentary Homolog from the Fission Yeast Schizosaccharomyces pombe.</title>
        <authorList>
            <person name="Krzyzanowski M.K."/>
            <person name="Kozlowska E."/>
            <person name="Kozlowski P."/>
        </authorList>
    </citation>
    <scope>NUCLEOTIDE SEQUENCE [GENOMIC DNA / MRNA]</scope>
    <scope>IDENTIFICATION BY MASS SPECTROMETRY</scope>
    <scope>SUBCELLULAR LOCATION</scope>
    <scope>DISRUPTION PHENOTYPE</scope>
    <source>
        <strain evidence="6">972 / ATCC 24843</strain>
    </source>
</reference>
<reference key="2">
    <citation type="journal article" date="2002" name="Nature">
        <title>The genome sequence of Schizosaccharomyces pombe.</title>
        <authorList>
            <person name="Wood V."/>
            <person name="Gwilliam R."/>
            <person name="Rajandream M.A."/>
            <person name="Lyne M.H."/>
            <person name="Lyne R."/>
            <person name="Stewart A."/>
            <person name="Sgouros J.G."/>
            <person name="Peat N."/>
            <person name="Hayles J."/>
            <person name="Baker S.G."/>
            <person name="Basham D."/>
            <person name="Bowman S."/>
            <person name="Brooks K."/>
            <person name="Brown D."/>
            <person name="Brown S."/>
            <person name="Chillingworth T."/>
            <person name="Churcher C.M."/>
            <person name="Collins M."/>
            <person name="Connor R."/>
            <person name="Cronin A."/>
            <person name="Davis P."/>
            <person name="Feltwell T."/>
            <person name="Fraser A."/>
            <person name="Gentles S."/>
            <person name="Goble A."/>
            <person name="Hamlin N."/>
            <person name="Harris D.E."/>
            <person name="Hidalgo J."/>
            <person name="Hodgson G."/>
            <person name="Holroyd S."/>
            <person name="Hornsby T."/>
            <person name="Howarth S."/>
            <person name="Huckle E.J."/>
            <person name="Hunt S."/>
            <person name="Jagels K."/>
            <person name="James K.D."/>
            <person name="Jones L."/>
            <person name="Jones M."/>
            <person name="Leather S."/>
            <person name="McDonald S."/>
            <person name="McLean J."/>
            <person name="Mooney P."/>
            <person name="Moule S."/>
            <person name="Mungall K.L."/>
            <person name="Murphy L.D."/>
            <person name="Niblett D."/>
            <person name="Odell C."/>
            <person name="Oliver K."/>
            <person name="O'Neil S."/>
            <person name="Pearson D."/>
            <person name="Quail M.A."/>
            <person name="Rabbinowitsch E."/>
            <person name="Rutherford K.M."/>
            <person name="Rutter S."/>
            <person name="Saunders D."/>
            <person name="Seeger K."/>
            <person name="Sharp S."/>
            <person name="Skelton J."/>
            <person name="Simmonds M.N."/>
            <person name="Squares R."/>
            <person name="Squares S."/>
            <person name="Stevens K."/>
            <person name="Taylor K."/>
            <person name="Taylor R.G."/>
            <person name="Tivey A."/>
            <person name="Walsh S.V."/>
            <person name="Warren T."/>
            <person name="Whitehead S."/>
            <person name="Woodward J.R."/>
            <person name="Volckaert G."/>
            <person name="Aert R."/>
            <person name="Robben J."/>
            <person name="Grymonprez B."/>
            <person name="Weltjens I."/>
            <person name="Vanstreels E."/>
            <person name="Rieger M."/>
            <person name="Schaefer M."/>
            <person name="Mueller-Auer S."/>
            <person name="Gabel C."/>
            <person name="Fuchs M."/>
            <person name="Duesterhoeft A."/>
            <person name="Fritzc C."/>
            <person name="Holzer E."/>
            <person name="Moestl D."/>
            <person name="Hilbert H."/>
            <person name="Borzym K."/>
            <person name="Langer I."/>
            <person name="Beck A."/>
            <person name="Lehrach H."/>
            <person name="Reinhardt R."/>
            <person name="Pohl T.M."/>
            <person name="Eger P."/>
            <person name="Zimmermann W."/>
            <person name="Wedler H."/>
            <person name="Wambutt R."/>
            <person name="Purnelle B."/>
            <person name="Goffeau A."/>
            <person name="Cadieu E."/>
            <person name="Dreano S."/>
            <person name="Gloux S."/>
            <person name="Lelaure V."/>
            <person name="Mottier S."/>
            <person name="Galibert F."/>
            <person name="Aves S.J."/>
            <person name="Xiang Z."/>
            <person name="Hunt C."/>
            <person name="Moore K."/>
            <person name="Hurst S.M."/>
            <person name="Lucas M."/>
            <person name="Rochet M."/>
            <person name="Gaillardin C."/>
            <person name="Tallada V.A."/>
            <person name="Garzon A."/>
            <person name="Thode G."/>
            <person name="Daga R.R."/>
            <person name="Cruzado L."/>
            <person name="Jimenez J."/>
            <person name="Sanchez M."/>
            <person name="del Rey F."/>
            <person name="Benito J."/>
            <person name="Dominguez A."/>
            <person name="Revuelta J.L."/>
            <person name="Moreno S."/>
            <person name="Armstrong J."/>
            <person name="Forsburg S.L."/>
            <person name="Cerutti L."/>
            <person name="Lowe T."/>
            <person name="McCombie W.R."/>
            <person name="Paulsen I."/>
            <person name="Potashkin J."/>
            <person name="Shpakovski G.V."/>
            <person name="Ussery D."/>
            <person name="Barrell B.G."/>
            <person name="Nurse P."/>
        </authorList>
    </citation>
    <scope>NUCLEOTIDE SEQUENCE [LARGE SCALE GENOMIC DNA]</scope>
    <source>
        <strain>972 / ATCC 24843</strain>
    </source>
</reference>
<reference key="3">
    <citation type="journal article" date="2011" name="Science">
        <title>Comparative functional genomics of the fission yeasts.</title>
        <authorList>
            <person name="Rhind N."/>
            <person name="Chen Z."/>
            <person name="Yassour M."/>
            <person name="Thompson D.A."/>
            <person name="Haas B.J."/>
            <person name="Habib N."/>
            <person name="Wapinski I."/>
            <person name="Roy S."/>
            <person name="Lin M.F."/>
            <person name="Heiman D.I."/>
            <person name="Young S.K."/>
            <person name="Furuya K."/>
            <person name="Guo Y."/>
            <person name="Pidoux A."/>
            <person name="Chen H.M."/>
            <person name="Robbertse B."/>
            <person name="Goldberg J.M."/>
            <person name="Aoki K."/>
            <person name="Bayne E.H."/>
            <person name="Berlin A.M."/>
            <person name="Desjardins C.A."/>
            <person name="Dobbs E."/>
            <person name="Dukaj L."/>
            <person name="Fan L."/>
            <person name="FitzGerald M.G."/>
            <person name="French C."/>
            <person name="Gujja S."/>
            <person name="Hansen K."/>
            <person name="Keifenheim D."/>
            <person name="Levin J.Z."/>
            <person name="Mosher R.A."/>
            <person name="Mueller C.A."/>
            <person name="Pfiffner J."/>
            <person name="Priest M."/>
            <person name="Russ C."/>
            <person name="Smialowska A."/>
            <person name="Swoboda P."/>
            <person name="Sykes S.M."/>
            <person name="Vaughn M."/>
            <person name="Vengrova S."/>
            <person name="Yoder R."/>
            <person name="Zeng Q."/>
            <person name="Allshire R."/>
            <person name="Baulcombe D."/>
            <person name="Birren B.W."/>
            <person name="Brown W."/>
            <person name="Ekwall K."/>
            <person name="Kellis M."/>
            <person name="Leatherwood J."/>
            <person name="Levin H."/>
            <person name="Margalit H."/>
            <person name="Martienssen R."/>
            <person name="Nieduszynski C.A."/>
            <person name="Spatafora J.W."/>
            <person name="Friedman N."/>
            <person name="Dalgaard J.Z."/>
            <person name="Baumann P."/>
            <person name="Niki H."/>
            <person name="Regev A."/>
            <person name="Nusbaum C."/>
        </authorList>
    </citation>
    <scope>IDENTIFICATION</scope>
</reference>
<reference key="4">
    <citation type="journal article" date="2011" name="Genetics">
        <title>Augmented annotation of the Schizosaccharomyces pombe genome reveals additional genes required for growth and viability.</title>
        <authorList>
            <person name="Bitton D.A."/>
            <person name="Wood V."/>
            <person name="Scutt P.J."/>
            <person name="Grallert A."/>
            <person name="Yates T."/>
            <person name="Smith D.L."/>
            <person name="Hagan I.M."/>
            <person name="Miller C.J."/>
        </authorList>
    </citation>
    <scope>IDENTIFICATION</scope>
</reference>
<reference key="5">
    <citation type="journal article" date="2016" name="Mol. Cell">
        <title>Enhancer of Rudimentary Cooperates with Conserved RNA-Processing Factors to Promote Meiotic mRNA Decay and Facultative Heterochromatin Assembly.</title>
        <authorList>
            <person name="Sugiyama T."/>
            <person name="Thillainadesan G."/>
            <person name="Chalamcharla V.R."/>
            <person name="Meng Z."/>
            <person name="Balachandran V."/>
            <person name="Dhakshnamoorthy J."/>
            <person name="Zhou M."/>
            <person name="Grewal S.I.S."/>
        </authorList>
    </citation>
    <scope>IDENTIFICATION BY MASS SPECTROMETRY</scope>
    <scope>FUNCTION</scope>
    <scope>IDENTIFICATION IN THE ERH1-MMI1 COMPLEX</scope>
    <scope>INTERACTION WITH MMI1</scope>
    <scope>SUBCELLULAR LOCATION</scope>
    <scope>DISRUPTION PHENOTYPE</scope>
</reference>
<reference evidence="8" key="6">
    <citation type="journal article" date="2019" name="Nat. Commun.">
        <title>A conserved dimer interface connects ERH and YTH family proteins to promote gene silencing.</title>
        <authorList>
            <person name="Xie G."/>
            <person name="Vo T.V."/>
            <person name="Thillainadesan G."/>
            <person name="Holla S."/>
            <person name="Zhang B."/>
            <person name="Jiang Y."/>
            <person name="Lv M."/>
            <person name="Xu Z."/>
            <person name="Wang C."/>
            <person name="Balachandran V."/>
            <person name="Shi Y."/>
            <person name="Li F."/>
            <person name="Grewal S.I.S."/>
        </authorList>
    </citation>
    <scope>X-RAY CRYSTALLOGRAPHY (2.70 ANGSTROMS) IN COMPLEX WITH MMI1</scope>
    <scope>FUNCTION</scope>
    <scope>SUBUNIT</scope>
    <scope>IDENTIFICATION IN THE ERH1-MMI1 COMPLEX</scope>
    <scope>INTERACTION WITH MMI1</scope>
    <scope>DISRUPTION PHENOTYPE</scope>
    <scope>MUTAGENESIS OF ASP-68</scope>
</reference>
<reference evidence="9" key="7">
    <citation type="journal article" date="2020" name="Sci. Rep.">
        <title>Formation of S. pombe Erh1 homodimer mediates gametogenic gene silencing and meiosis progression.</title>
        <authorList>
            <person name="Hazra D."/>
            <person name="Andric V."/>
            <person name="Palancade B."/>
            <person name="Rougemaille M."/>
            <person name="Graille M."/>
        </authorList>
    </citation>
    <scope>X-RAY CRYSTALLOGRAPHY (1.95 ANGSTROMS)</scope>
    <scope>FUNCTION</scope>
    <scope>SUBUNIT</scope>
    <scope>MUTAGENESIS OF 11-ILE--LEU-13</scope>
</reference>
<proteinExistence type="evidence at protein level"/>
<accession>G2TRN4</accession>
<accession>K7PD52</accession>
<comment type="function">
    <text evidence="2 3 4">Forms part of the erh1-mmi1 complex that recruits the CCR4-NOT complex and the NURS complex to target RNAs (PubMed:26942678, PubMed:30651569, PubMed:31974447). Suppresses the meiotic program during vegetative growth and promotes the meiotic program during mating (PubMed:31974447). Recruitment of the NURS complex to target mRNAs promotes mRNA decay by engagement of the nuclear exosome, and formation of heterochromatin islands at meiotic genes silenced by the exosome (PubMed:26942678). Recruitment of the CCR4-NOT complex to target RNAs promotes heterochromatin formation at RNAi-dependent heterochromatin domains (HOODs), including a subset of meiotic genes, lncRNAs and retrotransposons (PubMed:26942678). Recruitment of the CCR4-NOT complex to rDNA promotes rDNA heterochromatin assembly (PubMed:26942678).</text>
</comment>
<comment type="subunit">
    <text evidence="2 3 4">Homodimer (PubMed:30651569, PubMed:31974447). Component of the erh1-mmi1 complex (PubMed:26942678, PubMed:30651569). Interacts with mmi1 (via N-terminus) in a 2:2 stoichiometry (PubMed:26942678, PubMed:30651569, PubMed:31974447).</text>
</comment>
<comment type="subcellular location">
    <subcellularLocation>
        <location evidence="1 2">Nucleus</location>
    </subcellularLocation>
    <subcellularLocation>
        <location evidence="1">Cytoplasm</location>
    </subcellularLocation>
    <text evidence="2">Localizes to chromatin regions during vegetative growth, localizes to mei2 nuclear dots during meiosis.</text>
</comment>
<comment type="disruption phenotype">
    <text evidence="1 2 3 4">Abnormal poly(A)-site selection of ssm4 (PubMed:30651569). Decreases degradation of mRNA containing a DSR (determinant of selective removal) region (PubMed:26942678). Increases levels of mating and meiosis specific transcripts (PubMed:26942678, PubMed:30651569, PubMed:31974447). Increases expression of ncRNAs responsive to environmental and developmental signals (PubMed:30651569). Decreases expression of antisense RNAs, intergenic RNAs, tRNAs and 5S rRNA (PubMed:30651569). Decreases heterochromatin formation at meiotic heterochromatin islands (PubMed:26942678, PubMed:30651569). Decreases heterochromatin formation at rDNA (PubMed:26942678). Decreases mating efficiency (PubMed:26942678, PubMed:30651569). Decreases vegetative cell population growth (PubMed:23145069, PubMed:26942678, PubMed:31974447). Sensitive to cold (PubMed:26942678, PubMed:30651569, PubMed:31974447). Sensitive to sorbitol (PubMed:23145069). Sensitive to hydroxyurea (PubMed:23145069). Sensitive to sodium dodecyl sulfate (PubMed:23145069). Normal growth at high temperature (PubMed:30651569). Curved vegetative cell (PubMed:23145069). Increases cell cycle arrest in mitotic G1 phase in response to nitrogen starvation (PubMed:23145069). Abolishes mei2 nuclear dot formation (PubMed:26942678). Simultaneous deletion of mei4 suppresses cold sensitivity (PubMed:26942678).</text>
</comment>
<comment type="similarity">
    <text evidence="5">Belongs to the E(R) family.</text>
</comment>
<feature type="chain" id="PRO_0000416492" description="Enhancer of rudimentary homolog 1">
    <location>
        <begin position="1"/>
        <end position="104"/>
    </location>
</feature>
<feature type="mutagenesis site" description="Abolishes erh1 homodimer formation, abolishes meiRNA dot formation during vegetative growth, increases erh1 protein degradation, interaction with mmi1 appears normal, increases levels of several mating and meiosis specific transcripts, decreases mating efficiency." evidence="4">
    <original>ILL</original>
    <variation>RLR</variation>
    <location>
        <begin position="11"/>
        <end position="13"/>
    </location>
</feature>
<feature type="mutagenesis site" description="Decreases erh1-mmi1 interaction." evidence="3">
    <original>D</original>
    <variation>A</variation>
    <location>
        <position position="68"/>
    </location>
</feature>
<feature type="strand" evidence="11">
    <location>
        <begin position="9"/>
        <end position="16"/>
    </location>
</feature>
<feature type="strand" evidence="10">
    <location>
        <begin position="17"/>
        <end position="19"/>
    </location>
</feature>
<feature type="helix" evidence="11">
    <location>
        <begin position="20"/>
        <end position="22"/>
    </location>
</feature>
<feature type="strand" evidence="11">
    <location>
        <begin position="24"/>
        <end position="30"/>
    </location>
</feature>
<feature type="helix" evidence="11">
    <location>
        <begin position="31"/>
        <end position="44"/>
    </location>
</feature>
<feature type="helix" evidence="11">
    <location>
        <begin position="56"/>
        <end position="65"/>
    </location>
</feature>
<feature type="strand" evidence="11">
    <location>
        <begin position="67"/>
        <end position="75"/>
    </location>
</feature>
<feature type="turn" evidence="11">
    <location>
        <begin position="76"/>
        <end position="79"/>
    </location>
</feature>
<feature type="strand" evidence="11">
    <location>
        <begin position="80"/>
        <end position="83"/>
    </location>
</feature>
<feature type="helix" evidence="11">
    <location>
        <begin position="86"/>
        <end position="99"/>
    </location>
</feature>
<gene>
    <name evidence="7" type="primary">erh1</name>
    <name evidence="7" type="synonym">new10</name>
    <name type="ORF">SPAC19G12.17</name>
</gene>